<gene>
    <name evidence="4" type="primary">gspB</name>
    <name evidence="5 6" type="synonym">pinO</name>
    <name evidence="11" type="synonym">pioO</name>
    <name type="synonym">pno</name>
    <name type="ordered locus">b3322</name>
    <name type="ordered locus">JW3284</name>
</gene>
<dbReference type="EMBL" id="V00344">
    <property type="status" value="NOT_ANNOTATED_CDS"/>
    <property type="molecule type" value="Genomic_DNA"/>
</dbReference>
<dbReference type="EMBL" id="U18997">
    <property type="protein sequence ID" value="AAA58119.1"/>
    <property type="molecule type" value="Genomic_DNA"/>
</dbReference>
<dbReference type="EMBL" id="U00096">
    <property type="protein sequence ID" value="AAC76347.1"/>
    <property type="molecule type" value="Genomic_DNA"/>
</dbReference>
<dbReference type="EMBL" id="AP009048">
    <property type="protein sequence ID" value="BAE77969.1"/>
    <property type="molecule type" value="Genomic_DNA"/>
</dbReference>
<dbReference type="PIR" id="E65125">
    <property type="entry name" value="QQECRP"/>
</dbReference>
<dbReference type="RefSeq" id="NP_417781.1">
    <property type="nucleotide sequence ID" value="NC_000913.3"/>
</dbReference>
<dbReference type="RefSeq" id="WP_000461450.1">
    <property type="nucleotide sequence ID" value="NZ_SSZK01000040.1"/>
</dbReference>
<dbReference type="SMR" id="P03825"/>
<dbReference type="BioGRID" id="4261294">
    <property type="interactions" value="169"/>
</dbReference>
<dbReference type="FunCoup" id="P03825">
    <property type="interactions" value="3"/>
</dbReference>
<dbReference type="STRING" id="511145.b3322"/>
<dbReference type="PaxDb" id="511145-b3322"/>
<dbReference type="EnsemblBacteria" id="AAC76347">
    <property type="protein sequence ID" value="AAC76347"/>
    <property type="gene ID" value="b3322"/>
</dbReference>
<dbReference type="GeneID" id="947826"/>
<dbReference type="KEGG" id="ecj:JW3284"/>
<dbReference type="KEGG" id="eco:b3322"/>
<dbReference type="KEGG" id="ecoc:C3026_18050"/>
<dbReference type="PATRIC" id="fig|511145.12.peg.3415"/>
<dbReference type="EchoBASE" id="EB1243"/>
<dbReference type="eggNOG" id="ENOG5033BEH">
    <property type="taxonomic scope" value="Bacteria"/>
</dbReference>
<dbReference type="HOGENOM" id="CLU_152450_0_0_6"/>
<dbReference type="InParanoid" id="P03825"/>
<dbReference type="OMA" id="QSMWHER"/>
<dbReference type="OrthoDB" id="6626291at2"/>
<dbReference type="BioCyc" id="EcoCyc:EG11263-MONOMER"/>
<dbReference type="PRO" id="PR:P03825"/>
<dbReference type="Proteomes" id="UP000000625">
    <property type="component" value="Chromosome"/>
</dbReference>
<dbReference type="GO" id="GO:0005886">
    <property type="term" value="C:plasma membrane"/>
    <property type="evidence" value="ECO:0007669"/>
    <property type="project" value="UniProtKB-SubCell"/>
</dbReference>
<dbReference type="NCBIfam" id="NF007250">
    <property type="entry name" value="PRK09697.1"/>
    <property type="match status" value="1"/>
</dbReference>
<sequence>MFEFYIAAREQKETGHPGIFSRQKHSTIIYVICLLLICLWFAGMVLVGGYARQLWVLWIVKAEVTVEAETPAFKQSTQHYFFKKQPLPVVESVEEEDDPGVAVENAPSSSEDEENTVEESEEKAGLRERVKNALNELER</sequence>
<comment type="function">
    <text evidence="3 10">Part of a cryptic operon that encodes proteins involved in type II secretion pathway in other organisms, but is not expressed in strain K12 under standard laboratory conditions (PubMed:8655552). May play a regulatory role under conditions of derepressed gsp gene expression (PubMed:11118204).</text>
</comment>
<comment type="subcellular location">
    <subcellularLocation>
        <location evidence="7">Cell membrane</location>
        <topology evidence="1">Single-pass membrane protein</topology>
    </subcellularLocation>
</comment>
<comment type="induction">
    <text evidence="3">Silenced by the DNA-binding protein H-NS under standard growth conditions.</text>
</comment>
<comment type="caution">
    <text evidence="7 8 9">Was originally identified as the 11.3 kDa PinO protein, a calcium-binding protein synthesized in the absence of isoleucine in relA stains, which may be required for the initiation of chromosome replication (PubMed:1925011, PubMed:1938934). But GspB is predicted to be 15.9 kDa and has isoleucine residues, and there is no evidence that gspB encodes the PinO peptide or that it binds calcium.</text>
</comment>
<accession>P03825</accession>
<accession>Q2M6Y7</accession>
<proteinExistence type="evidence at transcript level"/>
<organism>
    <name type="scientific">Escherichia coli (strain K12)</name>
    <dbReference type="NCBI Taxonomy" id="83333"/>
    <lineage>
        <taxon>Bacteria</taxon>
        <taxon>Pseudomonadati</taxon>
        <taxon>Pseudomonadota</taxon>
        <taxon>Gammaproteobacteria</taxon>
        <taxon>Enterobacterales</taxon>
        <taxon>Enterobacteriaceae</taxon>
        <taxon>Escherichia</taxon>
    </lineage>
</organism>
<evidence type="ECO:0000255" key="1"/>
<evidence type="ECO:0000256" key="2">
    <source>
        <dbReference type="SAM" id="MobiDB-lite"/>
    </source>
</evidence>
<evidence type="ECO:0000269" key="3">
    <source>
    </source>
</evidence>
<evidence type="ECO:0000303" key="4">
    <source>
    </source>
</evidence>
<evidence type="ECO:0000303" key="5">
    <source>
    </source>
</evidence>
<evidence type="ECO:0000303" key="6">
    <source>
    </source>
</evidence>
<evidence type="ECO:0000305" key="7"/>
<evidence type="ECO:0000305" key="8">
    <source>
    </source>
</evidence>
<evidence type="ECO:0000305" key="9">
    <source>
    </source>
</evidence>
<evidence type="ECO:0000305" key="10">
    <source>
    </source>
</evidence>
<evidence type="ECO:0000312" key="11">
    <source>
        <dbReference type="EMBL" id="BAE77969.1"/>
    </source>
</evidence>
<keyword id="KW-1003">Cell membrane</keyword>
<keyword id="KW-0472">Membrane</keyword>
<keyword id="KW-1185">Reference proteome</keyword>
<keyword id="KW-0812">Transmembrane</keyword>
<keyword id="KW-1133">Transmembrane helix</keyword>
<reference key="1">
    <citation type="journal article" date="1981" name="Cell">
        <title>Regulation of the S10 ribosomal protein operon in E. coli: nucleotide sequence at the start of the operon.</title>
        <authorList>
            <person name="Olins P.O."/>
            <person name="Nomura M."/>
        </authorList>
    </citation>
    <scope>NUCLEOTIDE SEQUENCE [GENOMIC DNA]</scope>
</reference>
<reference key="2">
    <citation type="journal article" date="1997" name="Science">
        <title>The complete genome sequence of Escherichia coli K-12.</title>
        <authorList>
            <person name="Blattner F.R."/>
            <person name="Plunkett G. III"/>
            <person name="Bloch C.A."/>
            <person name="Perna N.T."/>
            <person name="Burland V."/>
            <person name="Riley M."/>
            <person name="Collado-Vides J."/>
            <person name="Glasner J.D."/>
            <person name="Rode C.K."/>
            <person name="Mayhew G.F."/>
            <person name="Gregor J."/>
            <person name="Davis N.W."/>
            <person name="Kirkpatrick H.A."/>
            <person name="Goeden M.A."/>
            <person name="Rose D.J."/>
            <person name="Mau B."/>
            <person name="Shao Y."/>
        </authorList>
    </citation>
    <scope>NUCLEOTIDE SEQUENCE [LARGE SCALE GENOMIC DNA]</scope>
    <source>
        <strain>K12 / MG1655 / ATCC 47076</strain>
    </source>
</reference>
<reference key="3">
    <citation type="journal article" date="2006" name="Mol. Syst. Biol.">
        <title>Highly accurate genome sequences of Escherichia coli K-12 strains MG1655 and W3110.</title>
        <authorList>
            <person name="Hayashi K."/>
            <person name="Morooka N."/>
            <person name="Yamamoto Y."/>
            <person name="Fujita K."/>
            <person name="Isono K."/>
            <person name="Choi S."/>
            <person name="Ohtsubo E."/>
            <person name="Baba T."/>
            <person name="Wanner B.L."/>
            <person name="Mori H."/>
            <person name="Horiuchi T."/>
        </authorList>
    </citation>
    <scope>NUCLEOTIDE SEQUENCE [LARGE SCALE GENOMIC DNA]</scope>
    <source>
        <strain>K12 / W3110 / ATCC 27325 / DSM 5911</strain>
    </source>
</reference>
<reference key="4">
    <citation type="journal article" date="1991" name="Res. Microbiol.">
        <title>A calcium-binding protein that may be required for the initiation of chromosome replication in Escherichia coli.</title>
        <authorList>
            <person name="Guzman E.C."/>
            <person name="Jimenez-Sanchez A."/>
        </authorList>
    </citation>
    <scope>IDENTIFICATION</scope>
</reference>
<reference key="5">
    <citation type="journal article" date="1991" name="J. Bacteriol.">
        <title>Location of pinO, a new gene located between tufA and rpsJ, on the physical map of the Escherichia coli chromosome.</title>
        <authorList>
            <person name="Guzman E.C."/>
            <person name="Jimenez-Sanchez A."/>
        </authorList>
    </citation>
    <scope>IDENTIFICATION</scope>
</reference>
<reference key="6">
    <citation type="journal article" date="1996" name="J. Bacteriol.">
        <title>The cryptic general secretory pathway (gsp) operon of Escherichia coli K-12 encodes functional proteins.</title>
        <authorList>
            <person name="Francetic O."/>
            <person name="Pugsley A.P."/>
        </authorList>
    </citation>
    <scope>LACK OF EXPRESSION OF THE OPERON</scope>
    <source>
        <strain>K12 / MC4100 / ATCC 35695 / DSM 6574</strain>
    </source>
</reference>
<reference key="7">
    <citation type="journal article" date="2000" name="EMBO J.">
        <title>Expression of the endogenous type II secretion pathway in Escherichia coli leads to chitinase secretion.</title>
        <authorList>
            <person name="Francetic O."/>
            <person name="Belin D."/>
            <person name="Badaut C."/>
            <person name="Pugsley A.P."/>
        </authorList>
    </citation>
    <scope>LACK OF EXPRESSION OF THE OPERON</scope>
    <scope>FUNCTION</scope>
    <scope>TRANSCRIPTIONAL REGULATION</scope>
    <source>
        <strain>K12 / MC4100 / ATCC 35695 / DSM 6574</strain>
    </source>
</reference>
<protein>
    <recommendedName>
        <fullName evidence="7">Putative general secretion pathway protein B</fullName>
    </recommendedName>
</protein>
<name>GSPB_ECOLI</name>
<feature type="chain" id="PRO_0000058445" description="Putative general secretion pathway protein B">
    <location>
        <begin position="1"/>
        <end position="139"/>
    </location>
</feature>
<feature type="transmembrane region" description="Helical" evidence="1">
    <location>
        <begin position="28"/>
        <end position="48"/>
    </location>
</feature>
<feature type="region of interest" description="Disordered" evidence="2">
    <location>
        <begin position="93"/>
        <end position="139"/>
    </location>
</feature>
<feature type="compositionally biased region" description="Acidic residues" evidence="2">
    <location>
        <begin position="110"/>
        <end position="121"/>
    </location>
</feature>
<feature type="compositionally biased region" description="Basic and acidic residues" evidence="2">
    <location>
        <begin position="122"/>
        <end position="139"/>
    </location>
</feature>
<feature type="sequence conflict" description="In Ref. 1; V00344." evidence="7" ref="1">
    <original>MFEFYIAAREQKETGHPGIFSRQKHSTIIYVICLLLICLWFAGMVLVGGYARQLWVLWIVKAEVTV</original>
    <variation>MTDLPVVCRNGAGWWVCQAAMGALDSKSRSHL</variation>
    <location>
        <begin position="1"/>
        <end position="66"/>
    </location>
</feature>